<protein>
    <recommendedName>
        <fullName>Mating-type protein beta1-1</fullName>
    </recommendedName>
</protein>
<proteinExistence type="inferred from homology"/>
<name>MAB11_COPCI</name>
<organism>
    <name type="scientific">Coprinopsis cinerea</name>
    <name type="common">Inky cap fungus</name>
    <name type="synonym">Hormographiella aspergillata</name>
    <dbReference type="NCBI Taxonomy" id="5346"/>
    <lineage>
        <taxon>Eukaryota</taxon>
        <taxon>Fungi</taxon>
        <taxon>Dikarya</taxon>
        <taxon>Basidiomycota</taxon>
        <taxon>Agaricomycotina</taxon>
        <taxon>Agaricomycetes</taxon>
        <taxon>Agaricomycetidae</taxon>
        <taxon>Agaricales</taxon>
        <taxon>Agaricineae</taxon>
        <taxon>Psathyrellaceae</taxon>
        <taxon>Coprinopsis</taxon>
    </lineage>
</organism>
<feature type="chain" id="PRO_0000049192" description="Mating-type protein beta1-1">
    <location>
        <begin position="1"/>
        <end position="681"/>
    </location>
</feature>
<feature type="DNA-binding region" description="Homeobox; TALE-type" evidence="1">
    <location>
        <begin position="165"/>
        <end position="227"/>
    </location>
</feature>
<feature type="region of interest" description="Disordered" evidence="2">
    <location>
        <begin position="307"/>
        <end position="341"/>
    </location>
</feature>
<feature type="region of interest" description="Disordered" evidence="2">
    <location>
        <begin position="353"/>
        <end position="381"/>
    </location>
</feature>
<feature type="region of interest" description="Disordered" evidence="2">
    <location>
        <begin position="394"/>
        <end position="466"/>
    </location>
</feature>
<feature type="compositionally biased region" description="Basic and acidic residues" evidence="2">
    <location>
        <begin position="307"/>
        <end position="318"/>
    </location>
</feature>
<feature type="compositionally biased region" description="Low complexity" evidence="2">
    <location>
        <begin position="413"/>
        <end position="430"/>
    </location>
</feature>
<evidence type="ECO:0000255" key="1">
    <source>
        <dbReference type="PROSITE-ProRule" id="PRU00108"/>
    </source>
</evidence>
<evidence type="ECO:0000256" key="2">
    <source>
        <dbReference type="SAM" id="MobiDB-lite"/>
    </source>
</evidence>
<evidence type="ECO:0000305" key="3"/>
<sequence length="681" mass="75057">MFAVFWTNLRCLGYNTFTCGVETPTTWGKVGSLDASSSTFTTYRGYPLAMAISAGTPACDSPDDNIRRAINTLRADLSALLRGESVAYSAFLSACTKFDGFAQSCHGMLSDDTLDLLYSFSESLLALSENMALLETKKEAESNKFTAEVMAILSDKTSGLDLSDDKNEPTSPTPAYVEPCARWLKDNWYNPYPSGEVRTQIARQTRTSRKDIDAWFIDARRRIGWNEVRRKHFENKRVDIVRAASIFTGPQSIPAEVDALPDHIELEFAGILSRARSLYEEKFSPSKLAVKLDTAVKDMTPSLKEQLKNDEARRKREASTVGIINQRARHAYPTPERSPASAAELLASPPSFAIDSDKLPSVGRKRRRSLESDETVSSPLCKRPRSQSVFCELSPVKGLPSPSPSTQDELLETSAAPSPQPSLLPKLTPTDSARSTGKRKRRLSDGFQYPAAKRPEIRPQVVSDPFPATSSEHWEQWFREHVLSSPELTLTGDIPPAVTTDAPDSNTPLDIQLFNFPLIPDLPPSVPVVPAPTAELNIIEPLEVPAVTQVNVDPEATALDHTFSWMASDFPPPLQSTNTFPSSSPFSALDGMSLPFPDTRSSAFLPDPSLWSNISDPDLDFSTVFSQPSTNSAMTSSIQVPLQPTWLTSRSLSEQEREAKRKELEELEARAQAIRAEISAP</sequence>
<keyword id="KW-0238">DNA-binding</keyword>
<keyword id="KW-0371">Homeobox</keyword>
<keyword id="KW-0539">Nucleus</keyword>
<keyword id="KW-0804">Transcription</keyword>
<keyword id="KW-0805">Transcription regulation</keyword>
<reference key="1">
    <citation type="journal article" date="1992" name="EMBO J.">
        <title>A fungal mating type protein that regulates sexual and asexual development contains a POU-related domain.</title>
        <authorList>
            <person name="Tymon A.M."/>
            <person name="Kues U."/>
            <person name="Richardson W.V.J."/>
            <person name="Casselton L.A."/>
        </authorList>
    </citation>
    <scope>NUCLEOTIDE SEQUENCE [GENOMIC DNA]</scope>
    <source>
        <strain>JV6</strain>
    </source>
</reference>
<accession>P40333</accession>
<dbReference type="EMBL" id="X62336">
    <property type="protein sequence ID" value="CAA44210.1"/>
    <property type="molecule type" value="Genomic_DNA"/>
</dbReference>
<dbReference type="PIR" id="S20902">
    <property type="entry name" value="S20902"/>
</dbReference>
<dbReference type="SMR" id="P40333"/>
<dbReference type="VEuPathDB" id="FungiDB:CC1G_01831"/>
<dbReference type="VEuPathDB" id="FungiDB:CC2G_000672"/>
<dbReference type="GO" id="GO:0005634">
    <property type="term" value="C:nucleus"/>
    <property type="evidence" value="ECO:0007669"/>
    <property type="project" value="UniProtKB-SubCell"/>
</dbReference>
<dbReference type="GO" id="GO:0003677">
    <property type="term" value="F:DNA binding"/>
    <property type="evidence" value="ECO:0007669"/>
    <property type="project" value="UniProtKB-KW"/>
</dbReference>
<dbReference type="GO" id="GO:0006355">
    <property type="term" value="P:regulation of DNA-templated transcription"/>
    <property type="evidence" value="ECO:0007669"/>
    <property type="project" value="InterPro"/>
</dbReference>
<dbReference type="CDD" id="cd00086">
    <property type="entry name" value="homeodomain"/>
    <property type="match status" value="1"/>
</dbReference>
<dbReference type="Gene3D" id="1.10.10.60">
    <property type="entry name" value="Homeodomain-like"/>
    <property type="match status" value="1"/>
</dbReference>
<dbReference type="InterPro" id="IPR001356">
    <property type="entry name" value="HD"/>
</dbReference>
<dbReference type="InterPro" id="IPR009057">
    <property type="entry name" value="Homeodomain-like_sf"/>
</dbReference>
<dbReference type="InterPro" id="IPR024441">
    <property type="entry name" value="Homeodomain1_C"/>
</dbReference>
<dbReference type="InterPro" id="IPR008422">
    <property type="entry name" value="KN_HD"/>
</dbReference>
<dbReference type="InterPro" id="IPR024333">
    <property type="entry name" value="Mating-type_A-alpha/beta_1_N"/>
</dbReference>
<dbReference type="Pfam" id="PF05920">
    <property type="entry name" value="Homeobox_KN"/>
    <property type="match status" value="1"/>
</dbReference>
<dbReference type="Pfam" id="PF12737">
    <property type="entry name" value="Mating_C"/>
    <property type="match status" value="1"/>
</dbReference>
<dbReference type="Pfam" id="PF12731">
    <property type="entry name" value="Mating_N"/>
    <property type="match status" value="1"/>
</dbReference>
<dbReference type="SMART" id="SM00389">
    <property type="entry name" value="HOX"/>
    <property type="match status" value="1"/>
</dbReference>
<dbReference type="SUPFAM" id="SSF46689">
    <property type="entry name" value="Homeodomain-like"/>
    <property type="match status" value="1"/>
</dbReference>
<dbReference type="PROSITE" id="PS50071">
    <property type="entry name" value="HOMEOBOX_2"/>
    <property type="match status" value="1"/>
</dbReference>
<comment type="function">
    <text>Has a major regulatory role in sexual and asexual development. It may bind DNA itself or it may have a role in preventing DNA-binding of another protein.</text>
</comment>
<comment type="subunit">
    <text>May dimerize.</text>
</comment>
<comment type="subcellular location">
    <subcellularLocation>
        <location>Nucleus</location>
    </subcellularLocation>
</comment>
<comment type="domain">
    <text>The C-terminal domain has a high percentage of Ser, Pro and Thr residues.</text>
</comment>
<comment type="similarity">
    <text evidence="3">Belongs to the TALE/M-ATYP homeobox family.</text>
</comment>